<gene>
    <name type="primary">DEFA3</name>
    <name type="synonym">DEF3</name>
</gene>
<feature type="signal peptide">
    <location>
        <begin position="1"/>
        <end position="19"/>
    </location>
</feature>
<feature type="propeptide" id="PRO_0000006777">
    <location>
        <begin position="20"/>
        <end position="38"/>
    </location>
</feature>
<feature type="chain" id="PRO_0000006778" description="HP 3-56">
    <location>
        <begin position="39"/>
        <end position="94"/>
    </location>
</feature>
<feature type="peptide" id="PRO_0000006779" description="Neutrophil defensin 3">
    <location>
        <begin position="65"/>
        <end position="94"/>
    </location>
</feature>
<feature type="peptide" id="PRO_0000006780" description="Neutrophil defensin 2">
    <location>
        <begin position="66"/>
        <end position="94"/>
    </location>
</feature>
<feature type="disulfide bond">
    <location>
        <begin position="66"/>
        <end position="94"/>
    </location>
</feature>
<feature type="disulfide bond">
    <location>
        <begin position="68"/>
        <end position="83"/>
    </location>
</feature>
<feature type="disulfide bond">
    <location>
        <begin position="73"/>
        <end position="93"/>
    </location>
</feature>
<feature type="strand" evidence="11">
    <location>
        <begin position="67"/>
        <end position="71"/>
    </location>
</feature>
<feature type="strand" evidence="11">
    <location>
        <begin position="78"/>
        <end position="85"/>
    </location>
</feature>
<feature type="strand" evidence="11">
    <location>
        <begin position="88"/>
        <end position="94"/>
    </location>
</feature>
<sequence length="94" mass="10245">MRTLAILAAILLVALQAQAEPLQARADEVAAAPEQIAADIPEVVVSLAWDESLAPKHPGSRKNMDCYCRIPACIAGERRYGTCIYQGRLWAFCC</sequence>
<accession>P59666</accession>
<accession>P11479</accession>
<accession>Q14125</accession>
<keyword id="KW-0002">3D-structure</keyword>
<keyword id="KW-0044">Antibiotic</keyword>
<keyword id="KW-0929">Antimicrobial</keyword>
<keyword id="KW-0051">Antiviral defense</keyword>
<keyword id="KW-0211">Defensin</keyword>
<keyword id="KW-0903">Direct protein sequencing</keyword>
<keyword id="KW-1015">Disulfide bond</keyword>
<keyword id="KW-0295">Fungicide</keyword>
<keyword id="KW-1267">Proteomics identification</keyword>
<keyword id="KW-1185">Reference proteome</keyword>
<keyword id="KW-0964">Secreted</keyword>
<keyword id="KW-0732">Signal</keyword>
<protein>
    <recommendedName>
        <fullName>Neutrophil defensin 3</fullName>
    </recommendedName>
    <alternativeName>
        <fullName>Defensin, alpha 3</fullName>
    </alternativeName>
    <alternativeName>
        <fullName>HNP-3</fullName>
        <shortName>HP-3</shortName>
        <shortName>HP3</shortName>
    </alternativeName>
    <component>
        <recommendedName>
            <fullName>HP 3-56</fullName>
        </recommendedName>
    </component>
    <component>
        <recommendedName>
            <fullName>Neutrophil defensin 2</fullName>
        </recommendedName>
        <alternativeName>
            <fullName>HNP-2</fullName>
            <shortName>HP-2</shortName>
            <shortName>HP2</shortName>
        </alternativeName>
    </component>
</protein>
<proteinExistence type="evidence at protein level"/>
<comment type="function">
    <text evidence="1 2 3 4 5 6 7 8">Effector molecule of the innate immune system that acts via antibiotic-like properties against a broad array of infectious agents including bacteria, fungi, and viruses (PubMed:15616305, PubMed:15772169, PubMed:17142766). Possesses the ability to neutralize bacterial toxins such as B.anthracis lethal factor, Clostridium difficile cytotoxin B as well as leukocidin produced by Staphylococcus aureus (PubMed:15772169, PubMed:18435932, PubMed:25963798). Also blocks herpes simplex virus infection by interacting with envelope glycoprotein B and thus preventing its binding to heparan sulfate, the receptor for attachment (PubMed:17142766).</text>
</comment>
<comment type="subunit">
    <text evidence="5 7">Dimer.</text>
</comment>
<comment type="subunit">
    <text evidence="4">(Microbial infection) Interacts with herpes virus 1 HHV-1 envelope glycoprotein B; this interaction inhibits viral infection.</text>
</comment>
<comment type="subcellular location">
    <subcellularLocation>
        <location evidence="9">Secreted</location>
    </subcellularLocation>
</comment>
<comment type="similarity">
    <text evidence="10">Belongs to the alpha-defensin family.</text>
</comment>
<evidence type="ECO:0000269" key="1">
    <source>
    </source>
</evidence>
<evidence type="ECO:0000269" key="2">
    <source>
    </source>
</evidence>
<evidence type="ECO:0000269" key="3">
    <source>
    </source>
</evidence>
<evidence type="ECO:0000269" key="4">
    <source>
    </source>
</evidence>
<evidence type="ECO:0000269" key="5">
    <source>
    </source>
</evidence>
<evidence type="ECO:0000269" key="6">
    <source>
    </source>
</evidence>
<evidence type="ECO:0000269" key="7">
    <source>
    </source>
</evidence>
<evidence type="ECO:0000269" key="8">
    <source>
    </source>
</evidence>
<evidence type="ECO:0000269" key="9">
    <source>
    </source>
</evidence>
<evidence type="ECO:0000305" key="10"/>
<evidence type="ECO:0007829" key="11">
    <source>
        <dbReference type="PDB" id="1ZMI"/>
    </source>
</evidence>
<reference key="1">
    <citation type="journal article" date="1988" name="Proc. Natl. Acad. Sci. U.S.A.">
        <title>Isolation and characterization of human defensin cDNA clones.</title>
        <authorList>
            <person name="Daher K.A."/>
            <person name="Lehrer R.I."/>
            <person name="Ganz T."/>
            <person name="Kronenberg M."/>
        </authorList>
    </citation>
    <scope>NUCLEOTIDE SEQUENCE [MRNA]</scope>
</reference>
<reference key="2">
    <citation type="journal article" date="1989" name="Leukemia">
        <title>Differentiation stage-specific expression of a gene during granulopoiesis.</title>
        <authorList>
            <person name="Wiedemann L.M."/>
            <person name="Francis G.E."/>
            <person name="Lamb R.F."/>
            <person name="Burns J.H."/>
            <person name="Winnie J.N."/>
            <person name="McKenzie E.D."/>
            <person name="Birnie G.D."/>
        </authorList>
    </citation>
    <scope>NUCLEOTIDE SEQUENCE [MRNA]</scope>
</reference>
<reference key="3">
    <citation type="journal article" date="1993" name="FEBS Lett.">
        <title>The structure of neutrophil defensin genes.</title>
        <authorList>
            <person name="Linzmeier R."/>
            <person name="Michaelson D."/>
            <person name="Liu L."/>
            <person name="Ganz T."/>
        </authorList>
    </citation>
    <scope>NUCLEOTIDE SEQUENCE [GENOMIC DNA]</scope>
</reference>
<reference key="4">
    <citation type="journal article" date="1993" name="FEBS Lett.">
        <authorList>
            <person name="Linzmeier R."/>
            <person name="Michaelson D."/>
            <person name="Liu L."/>
            <person name="Ganz T."/>
        </authorList>
    </citation>
    <scope>ERRATUM OF PUBMED:8477861</scope>
</reference>
<reference key="5">
    <citation type="journal article" date="2004" name="Genome Res.">
        <title>The status, quality, and expansion of the NIH full-length cDNA project: the Mammalian Gene Collection (MGC).</title>
        <authorList>
            <consortium name="The MGC Project Team"/>
        </authorList>
    </citation>
    <scope>NUCLEOTIDE SEQUENCE [LARGE SCALE MRNA]</scope>
    <source>
        <tissue>Pancreas</tissue>
        <tissue>Spleen</tissue>
    </source>
</reference>
<reference key="6">
    <citation type="journal article" date="1985" name="J. Clin. Invest.">
        <title>Primary structures of three human neutrophil defensins.</title>
        <authorList>
            <person name="Selsted M.E."/>
            <person name="Harwig S.S.L."/>
            <person name="Ganz T."/>
            <person name="Schilling J.W."/>
            <person name="Lehrer R.I."/>
        </authorList>
    </citation>
    <scope>PROTEIN SEQUENCE OF 65-94</scope>
</reference>
<reference key="7">
    <citation type="journal article" date="1989" name="J. Biol. Chem.">
        <title>Determination of the disulfide array in the human defensin HNP-2. A covalently cyclized peptide.</title>
        <authorList>
            <person name="Selsted M.E."/>
            <person name="Harwig S.S.L."/>
        </authorList>
    </citation>
    <scope>DISULFIDE BONDS</scope>
</reference>
<reference key="8">
    <citation type="journal article" date="1992" name="Blood">
        <title>Posttranslational processing of defensins in immature human myeloid cells.</title>
        <authorList>
            <person name="Valore E.V."/>
            <person name="Ganz T."/>
        </authorList>
    </citation>
    <scope>PROTEOLYTIC PROCESSING</scope>
</reference>
<reference key="9">
    <citation type="journal article" date="2005" name="Antimicrob. Agents Chemother.">
        <title>Antibacterial activity and specificity of the six human alpha-defensins.</title>
        <authorList>
            <person name="Ericksen B."/>
            <person name="Wu Z."/>
            <person name="Lu W."/>
            <person name="Lehrer R.I."/>
        </authorList>
    </citation>
    <scope>FUNCTION</scope>
</reference>
<reference key="10">
    <citation type="journal article" date="2005" name="Proc. Natl. Acad. Sci. U.S.A.">
        <title>Human alpha-defensins neutralize anthrax lethal toxin and protect against its fatal consequences.</title>
        <authorList>
            <person name="Kim C."/>
            <person name="Gajendran N."/>
            <person name="Mittruecker H.W."/>
            <person name="Weiwad M."/>
            <person name="Song Y.H."/>
            <person name="Hurwitz R."/>
            <person name="Wilmanns M."/>
            <person name="Fischer G."/>
            <person name="Kaufmann S.H."/>
        </authorList>
    </citation>
    <scope>FUNCTION</scope>
</reference>
<reference key="11">
    <citation type="journal article" date="2006" name="J. Immunol.">
        <title>Human alpha- and beta-defensins block multiple steps in herpes simplex virus infection.</title>
        <authorList>
            <person name="Hazrati E."/>
            <person name="Galen B."/>
            <person name="Lu W."/>
            <person name="Wang W."/>
            <person name="Ouyang Y."/>
            <person name="Keller M.J."/>
            <person name="Lehrer R.I."/>
            <person name="Herold B.C."/>
        </authorList>
    </citation>
    <scope>INTERACTION WITH HERPES VIRUS 1 ENVELOPE GLYCOPROTEIN B (MICROBIAL INFECTION)</scope>
    <scope>FUNCTION</scope>
</reference>
<reference key="12">
    <citation type="journal article" date="2008" name="Gastroenterology">
        <title>Human alpha-defensins inhibit Clostridium difficile toxin B.</title>
        <authorList>
            <person name="Giesemann T."/>
            <person name="Guttenberg G."/>
            <person name="Aktories K."/>
        </authorList>
    </citation>
    <scope>FUNCTION</scope>
</reference>
<reference key="13">
    <citation type="journal article" date="2015" name="Lett. Appl. Microbiol.">
        <title>alpha-Defensins partially protect human neutrophils against Panton-Valentine leukocidin produced by Staphylococcus aureus.</title>
        <authorList>
            <person name="Cardot-Martin E."/>
            <person name="Casalegno J.S."/>
            <person name="Badiou C."/>
            <person name="Dauwalder O."/>
            <person name="Keller D."/>
            <person name="Prevost G."/>
            <person name="Rieg S."/>
            <person name="Kern W.V."/>
            <person name="Cuerq C."/>
            <person name="Etienne J."/>
            <person name="Vandenesch F."/>
            <person name="Lina G."/>
            <person name="Dumitrescu O."/>
        </authorList>
    </citation>
    <scope>FUNCTION</scope>
</reference>
<reference key="14">
    <citation type="journal article" date="2017" name="BMC Pulm Med">
        <title>Plasma levels of alarmin HNPs 1-3 associate with lung dysfunction after cardiac surgery in children.</title>
        <authorList>
            <person name="Liu X."/>
            <person name="Chen Q."/>
            <person name="Luo Y."/>
            <person name="Hu Y."/>
            <person name="Lai D."/>
            <person name="Zhang X."/>
            <person name="Zhang X."/>
            <person name="Yu J."/>
            <person name="Fang X."/>
            <person name="Shu Q."/>
        </authorList>
    </citation>
    <scope>SUBCELLULAR LOCATION</scope>
</reference>
<reference key="15">
    <citation type="journal article" date="1991" name="Science">
        <title>Crystal structure of defensin HNP-3, an amphiphilic dimer: mechanisms of membrane permeabilization.</title>
        <authorList>
            <person name="Hill C.P."/>
            <person name="Yee J."/>
            <person name="Selsted M.E."/>
            <person name="Eisenberg D."/>
        </authorList>
    </citation>
    <scope>X-RAY CRYSTALLOGRAPHY (1.9 ANGSTROMS) OF DEFENSIN 3</scope>
    <scope>SUBUNIT</scope>
    <scope>FUNCTION</scope>
</reference>
<reference key="16">
    <citation type="journal article" date="2005" name="J. Biol. Chem.">
        <title>Reconstruction of the conserved beta-bulge in mammalian defensins using D-amino acids.</title>
        <authorList>
            <person name="Xie C."/>
            <person name="Prahl A."/>
            <person name="Ericksen B."/>
            <person name="Wu Z."/>
            <person name="Zeng P."/>
            <person name="Li X."/>
            <person name="Lu W.-Y."/>
            <person name="Lubkowski J."/>
            <person name="Lu W."/>
        </authorList>
    </citation>
    <scope>X-RAY CRYSTALLOGRAPHY (1.15 ANGSTROMS) OF 66-94</scope>
    <scope>DISULFIDE BONDS</scope>
    <scope>FUNCTION</scope>
</reference>
<reference key="17">
    <citation type="journal article" date="2007" name="J. Biol. Chem.">
        <title>Toward understanding the cationicity of defensins. Arg and Lys versus their noncoded analogs.</title>
        <authorList>
            <person name="Zou G."/>
            <person name="de Leeuw E."/>
            <person name="Li C."/>
            <person name="Pazgier M."/>
            <person name="Li C."/>
            <person name="Zeng P."/>
            <person name="Lu W.-Y."/>
            <person name="Lubkowski J."/>
            <person name="Lu W."/>
        </authorList>
    </citation>
    <scope>X-RAY CRYSTALLOGRAPHY (2.4 ANGSTROMS) OF 65-94</scope>
    <scope>FUNCTION</scope>
    <scope>SUBUNIT</scope>
</reference>
<organism>
    <name type="scientific">Homo sapiens</name>
    <name type="common">Human</name>
    <dbReference type="NCBI Taxonomy" id="9606"/>
    <lineage>
        <taxon>Eukaryota</taxon>
        <taxon>Metazoa</taxon>
        <taxon>Chordata</taxon>
        <taxon>Craniata</taxon>
        <taxon>Vertebrata</taxon>
        <taxon>Euteleostomi</taxon>
        <taxon>Mammalia</taxon>
        <taxon>Eutheria</taxon>
        <taxon>Euarchontoglires</taxon>
        <taxon>Primates</taxon>
        <taxon>Haplorrhini</taxon>
        <taxon>Catarrhini</taxon>
        <taxon>Hominidae</taxon>
        <taxon>Homo</taxon>
    </lineage>
</organism>
<dbReference type="EMBL" id="M21131">
    <property type="protein sequence ID" value="AAA35753.2"/>
    <property type="molecule type" value="mRNA"/>
</dbReference>
<dbReference type="EMBL" id="M23281">
    <property type="protein sequence ID" value="AAA52304.1"/>
    <property type="molecule type" value="mRNA"/>
</dbReference>
<dbReference type="EMBL" id="L12691">
    <property type="protein sequence ID" value="AAB57722.1"/>
    <property type="molecule type" value="Genomic_DNA"/>
</dbReference>
<dbReference type="EMBL" id="X13621">
    <property type="protein sequence ID" value="CAA31952.1"/>
    <property type="molecule type" value="mRNA"/>
</dbReference>
<dbReference type="EMBL" id="BC027917">
    <property type="protein sequence ID" value="AAH27917.1"/>
    <property type="molecule type" value="mRNA"/>
</dbReference>
<dbReference type="CCDS" id="CCDS5962.1"/>
<dbReference type="PIR" id="C40499">
    <property type="entry name" value="C40499"/>
</dbReference>
<dbReference type="RefSeq" id="NP_005208.1">
    <property type="nucleotide sequence ID" value="NM_005217.4"/>
</dbReference>
<dbReference type="PDB" id="1DFN">
    <property type="method" value="X-ray"/>
    <property type="resolution" value="1.90 A"/>
    <property type="chains" value="A/B=65-94"/>
</dbReference>
<dbReference type="PDB" id="1ZMH">
    <property type="method" value="X-ray"/>
    <property type="resolution" value="1.50 A"/>
    <property type="chains" value="A/B/C/D=66-94"/>
</dbReference>
<dbReference type="PDB" id="1ZMI">
    <property type="method" value="X-ray"/>
    <property type="resolution" value="1.15 A"/>
    <property type="chains" value="A/B/C/D=66-94"/>
</dbReference>
<dbReference type="PDB" id="1ZMK">
    <property type="method" value="X-ray"/>
    <property type="resolution" value="1.30 A"/>
    <property type="chains" value="A/B=66-94"/>
</dbReference>
<dbReference type="PDB" id="2PM4">
    <property type="method" value="X-ray"/>
    <property type="resolution" value="1.95 A"/>
    <property type="chains" value="A/B=65-94"/>
</dbReference>
<dbReference type="PDB" id="2PM5">
    <property type="method" value="X-ray"/>
    <property type="resolution" value="2.40 A"/>
    <property type="chains" value="A/B=65-94"/>
</dbReference>
<dbReference type="PDBsum" id="1DFN"/>
<dbReference type="PDBsum" id="1ZMH"/>
<dbReference type="PDBsum" id="1ZMI"/>
<dbReference type="PDBsum" id="1ZMK"/>
<dbReference type="PDBsum" id="2PM4"/>
<dbReference type="PDBsum" id="2PM5"/>
<dbReference type="BMRB" id="P59666"/>
<dbReference type="SMR" id="P59666"/>
<dbReference type="BioGRID" id="108032">
    <property type="interactions" value="4"/>
</dbReference>
<dbReference type="FunCoup" id="P59666">
    <property type="interactions" value="217"/>
</dbReference>
<dbReference type="IntAct" id="P59666">
    <property type="interactions" value="2"/>
</dbReference>
<dbReference type="STRING" id="9606.ENSP00000328359"/>
<dbReference type="GlyGen" id="P59666">
    <property type="glycosylation" value="1 site, 1 O-linked glycan (1 site)"/>
</dbReference>
<dbReference type="iPTMnet" id="P59666"/>
<dbReference type="PhosphoSitePlus" id="P59666"/>
<dbReference type="BioMuta" id="DEFA3"/>
<dbReference type="DMDM" id="30316323"/>
<dbReference type="jPOST" id="P59666"/>
<dbReference type="MassIVE" id="P59666"/>
<dbReference type="PaxDb" id="9606-ENSP00000328359"/>
<dbReference type="PeptideAtlas" id="P59666"/>
<dbReference type="PRIDE" id="P59666"/>
<dbReference type="ProteomicsDB" id="57155"/>
<dbReference type="Pumba" id="P59666"/>
<dbReference type="TopDownProteomics" id="P59666"/>
<dbReference type="Antibodypedia" id="22005">
    <property type="antibodies" value="154 antibodies from 24 providers"/>
</dbReference>
<dbReference type="DNASU" id="1668"/>
<dbReference type="Ensembl" id="ENST00000327857.7">
    <property type="protein sequence ID" value="ENSP00000328359.2"/>
    <property type="gene ID" value="ENSG00000239839.7"/>
</dbReference>
<dbReference type="GeneID" id="1668"/>
<dbReference type="KEGG" id="hsa:1668"/>
<dbReference type="MANE-Select" id="ENST00000327857.7">
    <property type="protein sequence ID" value="ENSP00000328359.2"/>
    <property type="RefSeq nucleotide sequence ID" value="NM_005217.4"/>
    <property type="RefSeq protein sequence ID" value="NP_005208.1"/>
</dbReference>
<dbReference type="AGR" id="HGNC:2762"/>
<dbReference type="CTD" id="1668"/>
<dbReference type="DisGeNET" id="1668"/>
<dbReference type="GeneCards" id="DEFA3"/>
<dbReference type="HGNC" id="HGNC:2762">
    <property type="gene designation" value="DEFA3"/>
</dbReference>
<dbReference type="HPA" id="ENSG00000239839">
    <property type="expression patterns" value="Tissue enriched (bone)"/>
</dbReference>
<dbReference type="MIM" id="604522">
    <property type="type" value="gene"/>
</dbReference>
<dbReference type="neXtProt" id="NX_P59666"/>
<dbReference type="OpenTargets" id="ENSG00000239839"/>
<dbReference type="PharmGKB" id="PA27239"/>
<dbReference type="VEuPathDB" id="HostDB:ENSG00000239839"/>
<dbReference type="eggNOG" id="ENOG502T2EX">
    <property type="taxonomic scope" value="Eukaryota"/>
</dbReference>
<dbReference type="GeneTree" id="ENSGT00940000153268"/>
<dbReference type="InParanoid" id="P59666"/>
<dbReference type="OMA" id="DCYCRIP"/>
<dbReference type="OrthoDB" id="9530339at2759"/>
<dbReference type="PAN-GO" id="P59666">
    <property type="GO annotations" value="8 GO annotations based on evolutionary models"/>
</dbReference>
<dbReference type="PhylomeDB" id="P59666"/>
<dbReference type="TreeFam" id="TF338414"/>
<dbReference type="PathwayCommons" id="P59666"/>
<dbReference type="Reactome" id="R-HSA-1461973">
    <property type="pathway name" value="Defensins"/>
</dbReference>
<dbReference type="Reactome" id="R-HSA-1462054">
    <property type="pathway name" value="Alpha-defensins"/>
</dbReference>
<dbReference type="SignaLink" id="P59666"/>
<dbReference type="BioGRID-ORCS" id="1668">
    <property type="hits" value="3 hits in 235 CRISPR screens"/>
</dbReference>
<dbReference type="ChiTaRS" id="DEFA3">
    <property type="organism name" value="human"/>
</dbReference>
<dbReference type="EvolutionaryTrace" id="P59666"/>
<dbReference type="GeneWiki" id="DEFA3"/>
<dbReference type="GenomeRNAi" id="1668"/>
<dbReference type="Pharos" id="P59666">
    <property type="development level" value="Tbio"/>
</dbReference>
<dbReference type="PRO" id="PR:P59666"/>
<dbReference type="Proteomes" id="UP000005640">
    <property type="component" value="Chromosome 8"/>
</dbReference>
<dbReference type="RNAct" id="P59666">
    <property type="molecule type" value="protein"/>
</dbReference>
<dbReference type="Bgee" id="ENSG00000239839">
    <property type="expression patterns" value="Expressed in bone marrow and 80 other cell types or tissues"/>
</dbReference>
<dbReference type="ExpressionAtlas" id="P59666">
    <property type="expression patterns" value="baseline and differential"/>
</dbReference>
<dbReference type="GO" id="GO:0035578">
    <property type="term" value="C:azurophil granule lumen"/>
    <property type="evidence" value="ECO:0000304"/>
    <property type="project" value="Reactome"/>
</dbReference>
<dbReference type="GO" id="GO:0070062">
    <property type="term" value="C:extracellular exosome"/>
    <property type="evidence" value="ECO:0007005"/>
    <property type="project" value="UniProtKB"/>
</dbReference>
<dbReference type="GO" id="GO:0005576">
    <property type="term" value="C:extracellular region"/>
    <property type="evidence" value="ECO:0000304"/>
    <property type="project" value="Reactome"/>
</dbReference>
<dbReference type="GO" id="GO:0005615">
    <property type="term" value="C:extracellular space"/>
    <property type="evidence" value="ECO:0000314"/>
    <property type="project" value="UniProtKB"/>
</dbReference>
<dbReference type="GO" id="GO:0005796">
    <property type="term" value="C:Golgi lumen"/>
    <property type="evidence" value="ECO:0000304"/>
    <property type="project" value="Reactome"/>
</dbReference>
<dbReference type="GO" id="GO:0042803">
    <property type="term" value="F:protein homodimerization activity"/>
    <property type="evidence" value="ECO:0000314"/>
    <property type="project" value="UniProtKB"/>
</dbReference>
<dbReference type="GO" id="GO:0019731">
    <property type="term" value="P:antibacterial humoral response"/>
    <property type="evidence" value="ECO:0000314"/>
    <property type="project" value="UniProtKB"/>
</dbReference>
<dbReference type="GO" id="GO:0061844">
    <property type="term" value="P:antimicrobial humoral immune response mediated by antimicrobial peptide"/>
    <property type="evidence" value="ECO:0000314"/>
    <property type="project" value="UniProtKB"/>
</dbReference>
<dbReference type="GO" id="GO:0071222">
    <property type="term" value="P:cellular response to lipopolysaccharide"/>
    <property type="evidence" value="ECO:0000318"/>
    <property type="project" value="GO_Central"/>
</dbReference>
<dbReference type="GO" id="GO:0050832">
    <property type="term" value="P:defense response to fungus"/>
    <property type="evidence" value="ECO:0007669"/>
    <property type="project" value="UniProtKB-KW"/>
</dbReference>
<dbReference type="GO" id="GO:0050829">
    <property type="term" value="P:defense response to Gram-negative bacterium"/>
    <property type="evidence" value="ECO:0000318"/>
    <property type="project" value="GO_Central"/>
</dbReference>
<dbReference type="GO" id="GO:0050830">
    <property type="term" value="P:defense response to Gram-positive bacterium"/>
    <property type="evidence" value="ECO:0000314"/>
    <property type="project" value="UniProtKB"/>
</dbReference>
<dbReference type="GO" id="GO:0051607">
    <property type="term" value="P:defense response to virus"/>
    <property type="evidence" value="ECO:0007669"/>
    <property type="project" value="UniProtKB-KW"/>
</dbReference>
<dbReference type="GO" id="GO:0051673">
    <property type="term" value="P:disruption of plasma membrane integrity in another organism"/>
    <property type="evidence" value="ECO:0000318"/>
    <property type="project" value="GO_Central"/>
</dbReference>
<dbReference type="GO" id="GO:0030520">
    <property type="term" value="P:estrogen receptor signaling pathway"/>
    <property type="evidence" value="ECO:0000314"/>
    <property type="project" value="UniProtKB"/>
</dbReference>
<dbReference type="GO" id="GO:0002227">
    <property type="term" value="P:innate immune response in mucosa"/>
    <property type="evidence" value="ECO:0000314"/>
    <property type="project" value="UniProtKB"/>
</dbReference>
<dbReference type="GO" id="GO:0031640">
    <property type="term" value="P:killing of cells of another organism"/>
    <property type="evidence" value="ECO:0000314"/>
    <property type="project" value="UniProtKB"/>
</dbReference>
<dbReference type="InterPro" id="IPR016327">
    <property type="entry name" value="Alpha-defensin"/>
</dbReference>
<dbReference type="InterPro" id="IPR006081">
    <property type="entry name" value="Alpha-defensin_C"/>
</dbReference>
<dbReference type="InterPro" id="IPR002366">
    <property type="entry name" value="Alpha-defensin_N"/>
</dbReference>
<dbReference type="InterPro" id="IPR006080">
    <property type="entry name" value="Beta/alpha-defensin_C"/>
</dbReference>
<dbReference type="PANTHER" id="PTHR11876">
    <property type="entry name" value="ALPHA-DEFENSIN 1"/>
    <property type="match status" value="1"/>
</dbReference>
<dbReference type="PANTHER" id="PTHR11876:SF19">
    <property type="entry name" value="NEUTROPHIL DEFENSIN 1-RELATED"/>
    <property type="match status" value="1"/>
</dbReference>
<dbReference type="Pfam" id="PF00323">
    <property type="entry name" value="Defensin_1"/>
    <property type="match status" value="1"/>
</dbReference>
<dbReference type="Pfam" id="PF00879">
    <property type="entry name" value="Defensin_propep"/>
    <property type="match status" value="1"/>
</dbReference>
<dbReference type="PIRSF" id="PIRSF001875">
    <property type="entry name" value="Alpha-defensin"/>
    <property type="match status" value="1"/>
</dbReference>
<dbReference type="SMART" id="SM01418">
    <property type="entry name" value="Defensin_propep"/>
    <property type="match status" value="1"/>
</dbReference>
<dbReference type="SMART" id="SM00048">
    <property type="entry name" value="DEFSN"/>
    <property type="match status" value="1"/>
</dbReference>
<dbReference type="SUPFAM" id="SSF57392">
    <property type="entry name" value="Defensin-like"/>
    <property type="match status" value="1"/>
</dbReference>
<dbReference type="PROSITE" id="PS00269">
    <property type="entry name" value="DEFENSIN"/>
    <property type="match status" value="1"/>
</dbReference>
<name>DEF3_HUMAN</name>